<name>YCF54_PYRYE</name>
<evidence type="ECO:0000305" key="1"/>
<geneLocation type="chloroplast"/>
<sequence length="111" mass="12982">MTTYYFALASQNFLLVQEPLEEVFRERVNYYQSNNKAIDFWLIPNPSFLEKPEMISFKNLVPKDAVAIISTNPIFINWLKLRIGYICIGQFEDNLQLSEESLNITVLTDKI</sequence>
<keyword id="KW-0150">Chloroplast</keyword>
<keyword id="KW-0934">Plastid</keyword>
<gene>
    <name type="primary">ycf54</name>
</gene>
<reference key="1">
    <citation type="submission" date="2003-11" db="EMBL/GenBank/DDBJ databases">
        <title>Whole genome sequence of Porphyra yezoensis chloroplast.</title>
        <authorList>
            <person name="Kunimoto M."/>
            <person name="Morishima K."/>
            <person name="Yoshikawa M."/>
            <person name="Fukuda S."/>
            <person name="Kobayashi T."/>
            <person name="Kobayashi M."/>
            <person name="Okazaki T."/>
            <person name="Ohara I."/>
            <person name="Nakayama I."/>
        </authorList>
    </citation>
    <scope>NUCLEOTIDE SEQUENCE [LARGE SCALE GENOMIC DNA]</scope>
    <source>
        <strain>U-51</strain>
    </source>
</reference>
<organism>
    <name type="scientific">Pyropia yezoensis</name>
    <name type="common">Susabi-nori</name>
    <name type="synonym">Porphyra yezoensis</name>
    <dbReference type="NCBI Taxonomy" id="2788"/>
    <lineage>
        <taxon>Eukaryota</taxon>
        <taxon>Rhodophyta</taxon>
        <taxon>Bangiophyceae</taxon>
        <taxon>Bangiales</taxon>
        <taxon>Bangiaceae</taxon>
        <taxon>Pyropia</taxon>
    </lineage>
</organism>
<comment type="subcellular location">
    <subcellularLocation>
        <location>Plastid</location>
        <location>Chloroplast</location>
    </subcellularLocation>
</comment>
<comment type="similarity">
    <text evidence="1">Belongs to the ycf54 family.</text>
</comment>
<proteinExistence type="inferred from homology"/>
<accession>Q1XDT3</accession>
<dbReference type="EMBL" id="AP006715">
    <property type="protein sequence ID" value="BAE92328.1"/>
    <property type="molecule type" value="Genomic_DNA"/>
</dbReference>
<dbReference type="RefSeq" id="YP_536885.1">
    <property type="nucleotide sequence ID" value="NC_007932.1"/>
</dbReference>
<dbReference type="SMR" id="Q1XDT3"/>
<dbReference type="GO" id="GO:0009507">
    <property type="term" value="C:chloroplast"/>
    <property type="evidence" value="ECO:0007669"/>
    <property type="project" value="UniProtKB-SubCell"/>
</dbReference>
<dbReference type="Gene3D" id="3.30.70.1860">
    <property type="entry name" value="Uncharacterised protein family Ycf54"/>
    <property type="match status" value="1"/>
</dbReference>
<dbReference type="InterPro" id="IPR019616">
    <property type="entry name" value="Ycf54"/>
</dbReference>
<dbReference type="InterPro" id="IPR038409">
    <property type="entry name" value="Ycf54-like_sf"/>
</dbReference>
<dbReference type="PANTHER" id="PTHR35319">
    <property type="match status" value="1"/>
</dbReference>
<dbReference type="PANTHER" id="PTHR35319:SF2">
    <property type="entry name" value="YCF54"/>
    <property type="match status" value="1"/>
</dbReference>
<dbReference type="Pfam" id="PF10674">
    <property type="entry name" value="Ycf54"/>
    <property type="match status" value="1"/>
</dbReference>
<protein>
    <recommendedName>
        <fullName>Uncharacterized protein ycf54</fullName>
    </recommendedName>
</protein>
<feature type="chain" id="PRO_0000277355" description="Uncharacterized protein ycf54">
    <location>
        <begin position="1"/>
        <end position="111"/>
    </location>
</feature>